<comment type="function">
    <text evidence="1">This protein is located at the 30S-50S ribosomal subunit interface and may play a role in the structure and function of the aminoacyl-tRNA binding site.</text>
</comment>
<comment type="similarity">
    <text evidence="1">Belongs to the bacterial ribosomal protein bL19 family.</text>
</comment>
<organism>
    <name type="scientific">Alcanivorax borkumensis (strain ATCC 700651 / DSM 11573 / NCIMB 13689 / SK2)</name>
    <dbReference type="NCBI Taxonomy" id="393595"/>
    <lineage>
        <taxon>Bacteria</taxon>
        <taxon>Pseudomonadati</taxon>
        <taxon>Pseudomonadota</taxon>
        <taxon>Gammaproteobacteria</taxon>
        <taxon>Oceanospirillales</taxon>
        <taxon>Alcanivoracaceae</taxon>
        <taxon>Alcanivorax</taxon>
    </lineage>
</organism>
<evidence type="ECO:0000255" key="1">
    <source>
        <dbReference type="HAMAP-Rule" id="MF_00402"/>
    </source>
</evidence>
<evidence type="ECO:0000305" key="2"/>
<sequence length="118" mass="13290">MSGKNLIIQGIEEAQLKSELPEFSAGDTVTVQVKVKEGTRERLQAFQGVVIARRNRGLNSAFTVRKISHGVGVERVFQLHSPLIDSIEVNRRGDVSRAKLYYLRDRSGKSARIKEKIR</sequence>
<accession>Q0VRE9</accession>
<gene>
    <name evidence="1" type="primary">rplS</name>
    <name type="ordered locus">ABO_0801</name>
</gene>
<name>RL19_ALCBS</name>
<keyword id="KW-1185">Reference proteome</keyword>
<keyword id="KW-0687">Ribonucleoprotein</keyword>
<keyword id="KW-0689">Ribosomal protein</keyword>
<protein>
    <recommendedName>
        <fullName evidence="1">Large ribosomal subunit protein bL19</fullName>
    </recommendedName>
    <alternativeName>
        <fullName evidence="2">50S ribosomal protein L19</fullName>
    </alternativeName>
</protein>
<dbReference type="EMBL" id="AM286690">
    <property type="protein sequence ID" value="CAL16249.1"/>
    <property type="molecule type" value="Genomic_DNA"/>
</dbReference>
<dbReference type="RefSeq" id="WP_011588085.1">
    <property type="nucleotide sequence ID" value="NC_008260.1"/>
</dbReference>
<dbReference type="SMR" id="Q0VRE9"/>
<dbReference type="STRING" id="393595.ABO_0801"/>
<dbReference type="KEGG" id="abo:ABO_0801"/>
<dbReference type="eggNOG" id="COG0335">
    <property type="taxonomic scope" value="Bacteria"/>
</dbReference>
<dbReference type="HOGENOM" id="CLU_103507_2_2_6"/>
<dbReference type="OrthoDB" id="9803541at2"/>
<dbReference type="Proteomes" id="UP000008871">
    <property type="component" value="Chromosome"/>
</dbReference>
<dbReference type="GO" id="GO:0022625">
    <property type="term" value="C:cytosolic large ribosomal subunit"/>
    <property type="evidence" value="ECO:0007669"/>
    <property type="project" value="TreeGrafter"/>
</dbReference>
<dbReference type="GO" id="GO:0003735">
    <property type="term" value="F:structural constituent of ribosome"/>
    <property type="evidence" value="ECO:0007669"/>
    <property type="project" value="InterPro"/>
</dbReference>
<dbReference type="GO" id="GO:0006412">
    <property type="term" value="P:translation"/>
    <property type="evidence" value="ECO:0007669"/>
    <property type="project" value="UniProtKB-UniRule"/>
</dbReference>
<dbReference type="FunFam" id="2.30.30.790:FF:000001">
    <property type="entry name" value="50S ribosomal protein L19"/>
    <property type="match status" value="1"/>
</dbReference>
<dbReference type="Gene3D" id="2.30.30.790">
    <property type="match status" value="1"/>
</dbReference>
<dbReference type="HAMAP" id="MF_00402">
    <property type="entry name" value="Ribosomal_bL19"/>
    <property type="match status" value="1"/>
</dbReference>
<dbReference type="InterPro" id="IPR001857">
    <property type="entry name" value="Ribosomal_bL19"/>
</dbReference>
<dbReference type="InterPro" id="IPR018257">
    <property type="entry name" value="Ribosomal_bL19_CS"/>
</dbReference>
<dbReference type="InterPro" id="IPR038657">
    <property type="entry name" value="Ribosomal_bL19_sf"/>
</dbReference>
<dbReference type="InterPro" id="IPR008991">
    <property type="entry name" value="Translation_prot_SH3-like_sf"/>
</dbReference>
<dbReference type="NCBIfam" id="TIGR01024">
    <property type="entry name" value="rplS_bact"/>
    <property type="match status" value="1"/>
</dbReference>
<dbReference type="PANTHER" id="PTHR15680:SF9">
    <property type="entry name" value="LARGE RIBOSOMAL SUBUNIT PROTEIN BL19M"/>
    <property type="match status" value="1"/>
</dbReference>
<dbReference type="PANTHER" id="PTHR15680">
    <property type="entry name" value="RIBOSOMAL PROTEIN L19"/>
    <property type="match status" value="1"/>
</dbReference>
<dbReference type="Pfam" id="PF01245">
    <property type="entry name" value="Ribosomal_L19"/>
    <property type="match status" value="1"/>
</dbReference>
<dbReference type="PIRSF" id="PIRSF002191">
    <property type="entry name" value="Ribosomal_L19"/>
    <property type="match status" value="1"/>
</dbReference>
<dbReference type="PRINTS" id="PR00061">
    <property type="entry name" value="RIBOSOMALL19"/>
</dbReference>
<dbReference type="SUPFAM" id="SSF50104">
    <property type="entry name" value="Translation proteins SH3-like domain"/>
    <property type="match status" value="1"/>
</dbReference>
<dbReference type="PROSITE" id="PS01015">
    <property type="entry name" value="RIBOSOMAL_L19"/>
    <property type="match status" value="1"/>
</dbReference>
<proteinExistence type="inferred from homology"/>
<feature type="chain" id="PRO_0000252493" description="Large ribosomal subunit protein bL19">
    <location>
        <begin position="1"/>
        <end position="118"/>
    </location>
</feature>
<reference key="1">
    <citation type="journal article" date="2006" name="Nat. Biotechnol.">
        <title>Genome sequence of the ubiquitous hydrocarbon-degrading marine bacterium Alcanivorax borkumensis.</title>
        <authorList>
            <person name="Schneiker S."/>
            <person name="Martins dos Santos V.A.P."/>
            <person name="Bartels D."/>
            <person name="Bekel T."/>
            <person name="Brecht M."/>
            <person name="Buhrmester J."/>
            <person name="Chernikova T.N."/>
            <person name="Denaro R."/>
            <person name="Ferrer M."/>
            <person name="Gertler C."/>
            <person name="Goesmann A."/>
            <person name="Golyshina O.V."/>
            <person name="Kaminski F."/>
            <person name="Khachane A.N."/>
            <person name="Lang S."/>
            <person name="Linke B."/>
            <person name="McHardy A.C."/>
            <person name="Meyer F."/>
            <person name="Nechitaylo T."/>
            <person name="Puehler A."/>
            <person name="Regenhardt D."/>
            <person name="Rupp O."/>
            <person name="Sabirova J.S."/>
            <person name="Selbitschka W."/>
            <person name="Yakimov M.M."/>
            <person name="Timmis K.N."/>
            <person name="Vorhoelter F.-J."/>
            <person name="Weidner S."/>
            <person name="Kaiser O."/>
            <person name="Golyshin P.N."/>
        </authorList>
    </citation>
    <scope>NUCLEOTIDE SEQUENCE [LARGE SCALE GENOMIC DNA]</scope>
    <source>
        <strain>ATCC 700651 / DSM 11573 / NCIMB 13689 / SK2</strain>
    </source>
</reference>